<feature type="chain" id="PRO_0000108562" description="Transcriptional regulator MraZ">
    <location>
        <begin position="1"/>
        <end position="152"/>
    </location>
</feature>
<feature type="domain" description="SpoVT-AbrB 1" evidence="2">
    <location>
        <begin position="5"/>
        <end position="52"/>
    </location>
</feature>
<feature type="domain" description="SpoVT-AbrB 2" evidence="2">
    <location>
        <begin position="81"/>
        <end position="124"/>
    </location>
</feature>
<accession>Q66EL4</accession>
<comment type="function">
    <text evidence="1">Negatively regulates its own expression and that of the subsequent genes in the proximal part of the division and cell wall (dcw) gene cluster. Acts by binding directly to DNA. May also regulate the expression of genes outside the dcw cluster.</text>
</comment>
<comment type="subunit">
    <text evidence="1">Forms oligomers.</text>
</comment>
<comment type="subcellular location">
    <subcellularLocation>
        <location evidence="1">Cytoplasm</location>
        <location evidence="1">Nucleoid</location>
    </subcellularLocation>
</comment>
<comment type="similarity">
    <text evidence="1">Belongs to the MraZ family.</text>
</comment>
<name>MRAZ_YERPS</name>
<keyword id="KW-0963">Cytoplasm</keyword>
<keyword id="KW-0238">DNA-binding</keyword>
<keyword id="KW-0677">Repeat</keyword>
<keyword id="KW-0678">Repressor</keyword>
<keyword id="KW-0804">Transcription</keyword>
<keyword id="KW-0805">Transcription regulation</keyword>
<proteinExistence type="inferred from homology"/>
<sequence>MFRGATMVNLDSKGRLAVPTRYRESLNEESQGQMVCTIDLHQPCLLLYPLPEWEIIEQKLSRLSSMNPAERRVQRLLLGHASECQMDGAGRLLIAGTLRQHAGLNKEVMLVGQFNKFELWDEQTWYQQVKDDIDAEQSTQEPLSERLQDLSL</sequence>
<gene>
    <name evidence="1" type="primary">mraZ</name>
    <name type="ordered locus">YPTB0679</name>
</gene>
<evidence type="ECO:0000255" key="1">
    <source>
        <dbReference type="HAMAP-Rule" id="MF_01008"/>
    </source>
</evidence>
<evidence type="ECO:0000255" key="2">
    <source>
        <dbReference type="PROSITE-ProRule" id="PRU01076"/>
    </source>
</evidence>
<protein>
    <recommendedName>
        <fullName>Transcriptional regulator MraZ</fullName>
    </recommendedName>
</protein>
<organism>
    <name type="scientific">Yersinia pseudotuberculosis serotype I (strain IP32953)</name>
    <dbReference type="NCBI Taxonomy" id="273123"/>
    <lineage>
        <taxon>Bacteria</taxon>
        <taxon>Pseudomonadati</taxon>
        <taxon>Pseudomonadota</taxon>
        <taxon>Gammaproteobacteria</taxon>
        <taxon>Enterobacterales</taxon>
        <taxon>Yersiniaceae</taxon>
        <taxon>Yersinia</taxon>
    </lineage>
</organism>
<reference key="1">
    <citation type="journal article" date="2004" name="Proc. Natl. Acad. Sci. U.S.A.">
        <title>Insights into the evolution of Yersinia pestis through whole-genome comparison with Yersinia pseudotuberculosis.</title>
        <authorList>
            <person name="Chain P.S.G."/>
            <person name="Carniel E."/>
            <person name="Larimer F.W."/>
            <person name="Lamerdin J."/>
            <person name="Stoutland P.O."/>
            <person name="Regala W.M."/>
            <person name="Georgescu A.M."/>
            <person name="Vergez L.M."/>
            <person name="Land M.L."/>
            <person name="Motin V.L."/>
            <person name="Brubaker R.R."/>
            <person name="Fowler J."/>
            <person name="Hinnebusch J."/>
            <person name="Marceau M."/>
            <person name="Medigue C."/>
            <person name="Simonet M."/>
            <person name="Chenal-Francisque V."/>
            <person name="Souza B."/>
            <person name="Dacheux D."/>
            <person name="Elliott J.M."/>
            <person name="Derbise A."/>
            <person name="Hauser L.J."/>
            <person name="Garcia E."/>
        </authorList>
    </citation>
    <scope>NUCLEOTIDE SEQUENCE [LARGE SCALE GENOMIC DNA]</scope>
    <source>
        <strain>IP32953</strain>
    </source>
</reference>
<dbReference type="EMBL" id="BX936398">
    <property type="protein sequence ID" value="CAH19919.1"/>
    <property type="molecule type" value="Genomic_DNA"/>
</dbReference>
<dbReference type="RefSeq" id="WP_011191730.1">
    <property type="nucleotide sequence ID" value="NC_006155.1"/>
</dbReference>
<dbReference type="SMR" id="Q66EL4"/>
<dbReference type="GeneID" id="49787316"/>
<dbReference type="KEGG" id="ypo:BZ17_1876"/>
<dbReference type="KEGG" id="yps:YPTB0679"/>
<dbReference type="PATRIC" id="fig|273123.14.peg.1990"/>
<dbReference type="Proteomes" id="UP000001011">
    <property type="component" value="Chromosome"/>
</dbReference>
<dbReference type="GO" id="GO:0005737">
    <property type="term" value="C:cytoplasm"/>
    <property type="evidence" value="ECO:0007669"/>
    <property type="project" value="UniProtKB-UniRule"/>
</dbReference>
<dbReference type="GO" id="GO:0009295">
    <property type="term" value="C:nucleoid"/>
    <property type="evidence" value="ECO:0007669"/>
    <property type="project" value="UniProtKB-SubCell"/>
</dbReference>
<dbReference type="GO" id="GO:0003700">
    <property type="term" value="F:DNA-binding transcription factor activity"/>
    <property type="evidence" value="ECO:0007669"/>
    <property type="project" value="UniProtKB-UniRule"/>
</dbReference>
<dbReference type="GO" id="GO:0000976">
    <property type="term" value="F:transcription cis-regulatory region binding"/>
    <property type="evidence" value="ECO:0007669"/>
    <property type="project" value="TreeGrafter"/>
</dbReference>
<dbReference type="GO" id="GO:2000143">
    <property type="term" value="P:negative regulation of DNA-templated transcription initiation"/>
    <property type="evidence" value="ECO:0007669"/>
    <property type="project" value="TreeGrafter"/>
</dbReference>
<dbReference type="CDD" id="cd16321">
    <property type="entry name" value="MraZ_C"/>
    <property type="match status" value="1"/>
</dbReference>
<dbReference type="CDD" id="cd16320">
    <property type="entry name" value="MraZ_N"/>
    <property type="match status" value="1"/>
</dbReference>
<dbReference type="FunFam" id="3.40.1550.20:FF:000001">
    <property type="entry name" value="Transcriptional regulator MraZ"/>
    <property type="match status" value="1"/>
</dbReference>
<dbReference type="Gene3D" id="3.40.1550.20">
    <property type="entry name" value="Transcriptional regulator MraZ domain"/>
    <property type="match status" value="1"/>
</dbReference>
<dbReference type="HAMAP" id="MF_01008">
    <property type="entry name" value="MraZ"/>
    <property type="match status" value="1"/>
</dbReference>
<dbReference type="InterPro" id="IPR003444">
    <property type="entry name" value="MraZ"/>
</dbReference>
<dbReference type="InterPro" id="IPR035644">
    <property type="entry name" value="MraZ_C"/>
</dbReference>
<dbReference type="InterPro" id="IPR020603">
    <property type="entry name" value="MraZ_dom"/>
</dbReference>
<dbReference type="InterPro" id="IPR035642">
    <property type="entry name" value="MraZ_N"/>
</dbReference>
<dbReference type="InterPro" id="IPR038619">
    <property type="entry name" value="MraZ_sf"/>
</dbReference>
<dbReference type="InterPro" id="IPR007159">
    <property type="entry name" value="SpoVT-AbrB_dom"/>
</dbReference>
<dbReference type="InterPro" id="IPR037914">
    <property type="entry name" value="SpoVT-AbrB_sf"/>
</dbReference>
<dbReference type="NCBIfam" id="TIGR00242">
    <property type="entry name" value="division/cell wall cluster transcriptional repressor MraZ"/>
    <property type="match status" value="1"/>
</dbReference>
<dbReference type="PANTHER" id="PTHR34701">
    <property type="entry name" value="TRANSCRIPTIONAL REGULATOR MRAZ"/>
    <property type="match status" value="1"/>
</dbReference>
<dbReference type="PANTHER" id="PTHR34701:SF1">
    <property type="entry name" value="TRANSCRIPTIONAL REGULATOR MRAZ"/>
    <property type="match status" value="1"/>
</dbReference>
<dbReference type="Pfam" id="PF02381">
    <property type="entry name" value="MraZ"/>
    <property type="match status" value="2"/>
</dbReference>
<dbReference type="SUPFAM" id="SSF89447">
    <property type="entry name" value="AbrB/MazE/MraZ-like"/>
    <property type="match status" value="1"/>
</dbReference>
<dbReference type="PROSITE" id="PS51740">
    <property type="entry name" value="SPOVT_ABRB"/>
    <property type="match status" value="2"/>
</dbReference>